<reference key="1">
    <citation type="journal article" date="2006" name="Genome Biol.">
        <title>Genomic analysis reveals that Pseudomonas aeruginosa virulence is combinatorial.</title>
        <authorList>
            <person name="Lee D.G."/>
            <person name="Urbach J.M."/>
            <person name="Wu G."/>
            <person name="Liberati N.T."/>
            <person name="Feinbaum R.L."/>
            <person name="Miyata S."/>
            <person name="Diggins L.T."/>
            <person name="He J."/>
            <person name="Saucier M."/>
            <person name="Deziel E."/>
            <person name="Friedman L."/>
            <person name="Li L."/>
            <person name="Grills G."/>
            <person name="Montgomery K."/>
            <person name="Kucherlapati R."/>
            <person name="Rahme L.G."/>
            <person name="Ausubel F.M."/>
        </authorList>
    </citation>
    <scope>NUCLEOTIDE SEQUENCE [LARGE SCALE GENOMIC DNA]</scope>
    <source>
        <strain>UCBPP-PA14</strain>
    </source>
</reference>
<evidence type="ECO:0000255" key="1">
    <source>
        <dbReference type="HAMAP-Rule" id="MF_00147"/>
    </source>
</evidence>
<dbReference type="EC" id="5.3.1.1" evidence="1"/>
<dbReference type="EMBL" id="CP000438">
    <property type="protein sequence ID" value="ABJ14131.1"/>
    <property type="molecule type" value="Genomic_DNA"/>
</dbReference>
<dbReference type="RefSeq" id="WP_003100513.1">
    <property type="nucleotide sequence ID" value="NZ_CP034244.1"/>
</dbReference>
<dbReference type="SMR" id="Q02FS4"/>
<dbReference type="KEGG" id="pau:PA14_62830"/>
<dbReference type="PseudoCAP" id="PA14_62830"/>
<dbReference type="HOGENOM" id="CLU_024251_2_1_6"/>
<dbReference type="BioCyc" id="PAER208963:G1G74-5313-MONOMER"/>
<dbReference type="UniPathway" id="UPA00109">
    <property type="reaction ID" value="UER00189"/>
</dbReference>
<dbReference type="UniPathway" id="UPA00138"/>
<dbReference type="Proteomes" id="UP000000653">
    <property type="component" value="Chromosome"/>
</dbReference>
<dbReference type="GO" id="GO:0005829">
    <property type="term" value="C:cytosol"/>
    <property type="evidence" value="ECO:0007669"/>
    <property type="project" value="TreeGrafter"/>
</dbReference>
<dbReference type="GO" id="GO:0004807">
    <property type="term" value="F:triose-phosphate isomerase activity"/>
    <property type="evidence" value="ECO:0007669"/>
    <property type="project" value="UniProtKB-UniRule"/>
</dbReference>
<dbReference type="GO" id="GO:0006094">
    <property type="term" value="P:gluconeogenesis"/>
    <property type="evidence" value="ECO:0007669"/>
    <property type="project" value="UniProtKB-UniRule"/>
</dbReference>
<dbReference type="GO" id="GO:0046166">
    <property type="term" value="P:glyceraldehyde-3-phosphate biosynthetic process"/>
    <property type="evidence" value="ECO:0007669"/>
    <property type="project" value="TreeGrafter"/>
</dbReference>
<dbReference type="GO" id="GO:0019563">
    <property type="term" value="P:glycerol catabolic process"/>
    <property type="evidence" value="ECO:0007669"/>
    <property type="project" value="TreeGrafter"/>
</dbReference>
<dbReference type="GO" id="GO:0006096">
    <property type="term" value="P:glycolytic process"/>
    <property type="evidence" value="ECO:0007669"/>
    <property type="project" value="UniProtKB-UniRule"/>
</dbReference>
<dbReference type="CDD" id="cd00311">
    <property type="entry name" value="TIM"/>
    <property type="match status" value="1"/>
</dbReference>
<dbReference type="FunFam" id="3.20.20.70:FF:000016">
    <property type="entry name" value="Triosephosphate isomerase"/>
    <property type="match status" value="1"/>
</dbReference>
<dbReference type="Gene3D" id="3.20.20.70">
    <property type="entry name" value="Aldolase class I"/>
    <property type="match status" value="1"/>
</dbReference>
<dbReference type="HAMAP" id="MF_00147_B">
    <property type="entry name" value="TIM_B"/>
    <property type="match status" value="1"/>
</dbReference>
<dbReference type="InterPro" id="IPR013785">
    <property type="entry name" value="Aldolase_TIM"/>
</dbReference>
<dbReference type="InterPro" id="IPR035990">
    <property type="entry name" value="TIM_sf"/>
</dbReference>
<dbReference type="InterPro" id="IPR022896">
    <property type="entry name" value="TrioseP_Isoase_bac/euk"/>
</dbReference>
<dbReference type="InterPro" id="IPR000652">
    <property type="entry name" value="Triosephosphate_isomerase"/>
</dbReference>
<dbReference type="InterPro" id="IPR020861">
    <property type="entry name" value="Triosephosphate_isomerase_AS"/>
</dbReference>
<dbReference type="NCBIfam" id="TIGR00419">
    <property type="entry name" value="tim"/>
    <property type="match status" value="1"/>
</dbReference>
<dbReference type="PANTHER" id="PTHR21139">
    <property type="entry name" value="TRIOSEPHOSPHATE ISOMERASE"/>
    <property type="match status" value="1"/>
</dbReference>
<dbReference type="PANTHER" id="PTHR21139:SF42">
    <property type="entry name" value="TRIOSEPHOSPHATE ISOMERASE"/>
    <property type="match status" value="1"/>
</dbReference>
<dbReference type="Pfam" id="PF00121">
    <property type="entry name" value="TIM"/>
    <property type="match status" value="1"/>
</dbReference>
<dbReference type="SUPFAM" id="SSF51351">
    <property type="entry name" value="Triosephosphate isomerase (TIM)"/>
    <property type="match status" value="1"/>
</dbReference>
<dbReference type="PROSITE" id="PS00171">
    <property type="entry name" value="TIM_1"/>
    <property type="match status" value="1"/>
</dbReference>
<dbReference type="PROSITE" id="PS51440">
    <property type="entry name" value="TIM_2"/>
    <property type="match status" value="1"/>
</dbReference>
<name>TPIS_PSEAB</name>
<feature type="chain" id="PRO_0000307533" description="Triosephosphate isomerase">
    <location>
        <begin position="1"/>
        <end position="251"/>
    </location>
</feature>
<feature type="active site" description="Electrophile" evidence="1">
    <location>
        <position position="95"/>
    </location>
</feature>
<feature type="active site" description="Proton acceptor" evidence="1">
    <location>
        <position position="167"/>
    </location>
</feature>
<feature type="binding site" evidence="1">
    <location>
        <begin position="9"/>
        <end position="11"/>
    </location>
    <ligand>
        <name>substrate</name>
    </ligand>
</feature>
<feature type="binding site" evidence="1">
    <location>
        <position position="173"/>
    </location>
    <ligand>
        <name>substrate</name>
    </ligand>
</feature>
<feature type="binding site" evidence="1">
    <location>
        <position position="212"/>
    </location>
    <ligand>
        <name>substrate</name>
    </ligand>
</feature>
<feature type="binding site" evidence="1">
    <location>
        <begin position="233"/>
        <end position="234"/>
    </location>
    <ligand>
        <name>substrate</name>
    </ligand>
</feature>
<sequence length="251" mass="25621">MRRPLVAGNWKMHGTHSSVAELIKGLRQLALPSGVDVAVMPPCLFISQVIQGLAGKAIDVGAQNSAVEPMQGALTGETAPSQLADVGCSMVLVGHSERRLILGESDEVVSRKFAAAQSCGLVPVLCVGETRAEREAGKTLEVVARQLGSVIDELGVGAFARAVVAYEPVWAIGTGLTASPAQAQEVHAAIRAQLAAENAEVAKGVRLLYGGSVKAASAAELFGMPDIDGGLVGGASLNADEFGAICRAAGS</sequence>
<organism>
    <name type="scientific">Pseudomonas aeruginosa (strain UCBPP-PA14)</name>
    <dbReference type="NCBI Taxonomy" id="208963"/>
    <lineage>
        <taxon>Bacteria</taxon>
        <taxon>Pseudomonadati</taxon>
        <taxon>Pseudomonadota</taxon>
        <taxon>Gammaproteobacteria</taxon>
        <taxon>Pseudomonadales</taxon>
        <taxon>Pseudomonadaceae</taxon>
        <taxon>Pseudomonas</taxon>
    </lineage>
</organism>
<proteinExistence type="inferred from homology"/>
<gene>
    <name evidence="1" type="primary">tpiA</name>
    <name type="ordered locus">PA14_62830</name>
</gene>
<accession>Q02FS4</accession>
<keyword id="KW-0963">Cytoplasm</keyword>
<keyword id="KW-0312">Gluconeogenesis</keyword>
<keyword id="KW-0324">Glycolysis</keyword>
<keyword id="KW-0413">Isomerase</keyword>
<comment type="function">
    <text evidence="1">Involved in the gluconeogenesis. Catalyzes stereospecifically the conversion of dihydroxyacetone phosphate (DHAP) to D-glyceraldehyde-3-phosphate (G3P).</text>
</comment>
<comment type="catalytic activity">
    <reaction evidence="1">
        <text>D-glyceraldehyde 3-phosphate = dihydroxyacetone phosphate</text>
        <dbReference type="Rhea" id="RHEA:18585"/>
        <dbReference type="ChEBI" id="CHEBI:57642"/>
        <dbReference type="ChEBI" id="CHEBI:59776"/>
        <dbReference type="EC" id="5.3.1.1"/>
    </reaction>
</comment>
<comment type="pathway">
    <text evidence="1">Carbohydrate biosynthesis; gluconeogenesis.</text>
</comment>
<comment type="pathway">
    <text evidence="1">Carbohydrate degradation; glycolysis; D-glyceraldehyde 3-phosphate from glycerone phosphate: step 1/1.</text>
</comment>
<comment type="subunit">
    <text evidence="1">Homodimer.</text>
</comment>
<comment type="subcellular location">
    <subcellularLocation>
        <location evidence="1">Cytoplasm</location>
    </subcellularLocation>
</comment>
<comment type="similarity">
    <text evidence="1">Belongs to the triosephosphate isomerase family.</text>
</comment>
<protein>
    <recommendedName>
        <fullName evidence="1">Triosephosphate isomerase</fullName>
        <shortName evidence="1">TIM</shortName>
        <shortName evidence="1">TPI</shortName>
        <ecNumber evidence="1">5.3.1.1</ecNumber>
    </recommendedName>
    <alternativeName>
        <fullName evidence="1">Triose-phosphate isomerase</fullName>
    </alternativeName>
</protein>